<protein>
    <recommendedName>
        <fullName evidence="1">Putative gluconeogenesis factor</fullName>
    </recommendedName>
</protein>
<dbReference type="EMBL" id="AE003852">
    <property type="protein sequence ID" value="AAF94182.1"/>
    <property type="molecule type" value="Genomic_DNA"/>
</dbReference>
<dbReference type="PIR" id="E82250">
    <property type="entry name" value="E82250"/>
</dbReference>
<dbReference type="RefSeq" id="NP_230668.1">
    <property type="nucleotide sequence ID" value="NC_002505.1"/>
</dbReference>
<dbReference type="RefSeq" id="WP_000061070.1">
    <property type="nucleotide sequence ID" value="NZ_LT906614.1"/>
</dbReference>
<dbReference type="SMR" id="Q9KT82"/>
<dbReference type="STRING" id="243277.VC_1023"/>
<dbReference type="DNASU" id="2614293"/>
<dbReference type="EnsemblBacteria" id="AAF94182">
    <property type="protein sequence ID" value="AAF94182"/>
    <property type="gene ID" value="VC_1023"/>
</dbReference>
<dbReference type="KEGG" id="vch:VC_1023"/>
<dbReference type="PATRIC" id="fig|243277.26.peg.977"/>
<dbReference type="eggNOG" id="COG0391">
    <property type="taxonomic scope" value="Bacteria"/>
</dbReference>
<dbReference type="HOGENOM" id="CLU_044041_2_0_6"/>
<dbReference type="Proteomes" id="UP000000584">
    <property type="component" value="Chromosome 1"/>
</dbReference>
<dbReference type="GO" id="GO:0005737">
    <property type="term" value="C:cytoplasm"/>
    <property type="evidence" value="ECO:0007669"/>
    <property type="project" value="UniProtKB-SubCell"/>
</dbReference>
<dbReference type="GO" id="GO:0043743">
    <property type="term" value="F:LPPG:FO 2-phospho-L-lactate transferase activity"/>
    <property type="evidence" value="ECO:0007669"/>
    <property type="project" value="InterPro"/>
</dbReference>
<dbReference type="GO" id="GO:0008360">
    <property type="term" value="P:regulation of cell shape"/>
    <property type="evidence" value="ECO:0007669"/>
    <property type="project" value="UniProtKB-UniRule"/>
</dbReference>
<dbReference type="CDD" id="cd07187">
    <property type="entry name" value="YvcK_like"/>
    <property type="match status" value="1"/>
</dbReference>
<dbReference type="Gene3D" id="3.40.50.10680">
    <property type="entry name" value="CofD-like domains"/>
    <property type="match status" value="1"/>
</dbReference>
<dbReference type="HAMAP" id="MF_00973">
    <property type="entry name" value="Gluconeogen_factor"/>
    <property type="match status" value="1"/>
</dbReference>
<dbReference type="InterPro" id="IPR002882">
    <property type="entry name" value="CofD"/>
</dbReference>
<dbReference type="InterPro" id="IPR038136">
    <property type="entry name" value="CofD-like_dom_sf"/>
</dbReference>
<dbReference type="InterPro" id="IPR010119">
    <property type="entry name" value="Gluconeogen_factor"/>
</dbReference>
<dbReference type="NCBIfam" id="TIGR01826">
    <property type="entry name" value="CofD_related"/>
    <property type="match status" value="1"/>
</dbReference>
<dbReference type="PANTHER" id="PTHR30135:SF3">
    <property type="entry name" value="GLUCONEOGENESIS FACTOR-RELATED"/>
    <property type="match status" value="1"/>
</dbReference>
<dbReference type="PANTHER" id="PTHR30135">
    <property type="entry name" value="UNCHARACTERIZED PROTEIN YVCK-RELATED"/>
    <property type="match status" value="1"/>
</dbReference>
<dbReference type="Pfam" id="PF01933">
    <property type="entry name" value="CofD"/>
    <property type="match status" value="1"/>
</dbReference>
<dbReference type="SUPFAM" id="SSF142338">
    <property type="entry name" value="CofD-like"/>
    <property type="match status" value="1"/>
</dbReference>
<proteinExistence type="inferred from homology"/>
<feature type="chain" id="PRO_0000107821" description="Putative gluconeogenesis factor">
    <location>
        <begin position="1"/>
        <end position="296"/>
    </location>
</feature>
<gene>
    <name type="ordered locus">VC_1023</name>
</gene>
<accession>Q9KT82</accession>
<reference key="1">
    <citation type="journal article" date="2000" name="Nature">
        <title>DNA sequence of both chromosomes of the cholera pathogen Vibrio cholerae.</title>
        <authorList>
            <person name="Heidelberg J.F."/>
            <person name="Eisen J.A."/>
            <person name="Nelson W.C."/>
            <person name="Clayton R.A."/>
            <person name="Gwinn M.L."/>
            <person name="Dodson R.J."/>
            <person name="Haft D.H."/>
            <person name="Hickey E.K."/>
            <person name="Peterson J.D."/>
            <person name="Umayam L.A."/>
            <person name="Gill S.R."/>
            <person name="Nelson K.E."/>
            <person name="Read T.D."/>
            <person name="Tettelin H."/>
            <person name="Richardson D.L."/>
            <person name="Ermolaeva M.D."/>
            <person name="Vamathevan J.J."/>
            <person name="Bass S."/>
            <person name="Qin H."/>
            <person name="Dragoi I."/>
            <person name="Sellers P."/>
            <person name="McDonald L.A."/>
            <person name="Utterback T.R."/>
            <person name="Fleischmann R.D."/>
            <person name="Nierman W.C."/>
            <person name="White O."/>
            <person name="Salzberg S.L."/>
            <person name="Smith H.O."/>
            <person name="Colwell R.R."/>
            <person name="Mekalanos J.J."/>
            <person name="Venter J.C."/>
            <person name="Fraser C.M."/>
        </authorList>
    </citation>
    <scope>NUCLEOTIDE SEQUENCE [LARGE SCALE GENOMIC DNA]</scope>
    <source>
        <strain>ATCC 39315 / El Tor Inaba N16961</strain>
    </source>
</reference>
<name>GNGF_VIBCH</name>
<sequence length="296" mass="32573">MSLYENKKVVAIGGGHGLGRMLAALKVFGSNATGIVTTTDNGGSTGRIRHCQGGIAWGDTRNCINQLITEPSISSMMFEYRFKGAGELNGHNLGNLMLTALDNLSVRPLDAINLIRNMLKVDVNILPMSEHPSDLAALAMDGKWVTGETSVDEMTQDLRRLDLAPEVPATKEAVTAIQDADCVILGPGSFLTSVMPPLLLPELGKAIARNQTAKVIFVENLSPEYGPAGRMSLEQKLEWCERACQGRKIDVVLGHHPHPELEQRWNFVTRDLASANRDWRHDRQKLRQAIEEQLMN</sequence>
<evidence type="ECO:0000255" key="1">
    <source>
        <dbReference type="HAMAP-Rule" id="MF_00973"/>
    </source>
</evidence>
<organism>
    <name type="scientific">Vibrio cholerae serotype O1 (strain ATCC 39315 / El Tor Inaba N16961)</name>
    <dbReference type="NCBI Taxonomy" id="243277"/>
    <lineage>
        <taxon>Bacteria</taxon>
        <taxon>Pseudomonadati</taxon>
        <taxon>Pseudomonadota</taxon>
        <taxon>Gammaproteobacteria</taxon>
        <taxon>Vibrionales</taxon>
        <taxon>Vibrionaceae</taxon>
        <taxon>Vibrio</taxon>
    </lineage>
</organism>
<comment type="function">
    <text evidence="1">Required for morphogenesis under gluconeogenic growth conditions.</text>
</comment>
<comment type="subcellular location">
    <subcellularLocation>
        <location evidence="1">Cytoplasm</location>
    </subcellularLocation>
</comment>
<comment type="similarity">
    <text evidence="1">Belongs to the gluconeogenesis factor family.</text>
</comment>
<keyword id="KW-0963">Cytoplasm</keyword>
<keyword id="KW-1185">Reference proteome</keyword>